<reference key="1">
    <citation type="journal article" date="2004" name="J. Gen. Virol.">
        <title>Genetic content of wild-type human cytomegalovirus.</title>
        <authorList>
            <person name="Dolan A."/>
            <person name="Cunningham C."/>
            <person name="Hector R.D."/>
            <person name="Hassan-Walker A.F."/>
            <person name="Lee L."/>
            <person name="Addison C."/>
            <person name="Dargan D.J."/>
            <person name="McGeoch D.J."/>
            <person name="Gatherer D."/>
            <person name="Emery V.C."/>
            <person name="Griffiths P.D."/>
            <person name="Sinzger C."/>
            <person name="McSharry B.P."/>
            <person name="Wilkinson G.W.G."/>
            <person name="Davison A.J."/>
        </authorList>
    </citation>
    <scope>NUCLEOTIDE SEQUENCE [LARGE SCALE GENOMIC DNA]</scope>
    <source>
        <strain>Merlin</strain>
    </source>
</reference>
<evidence type="ECO:0000255" key="1"/>
<evidence type="ECO:0000305" key="2"/>
<dbReference type="EMBL" id="AY446894">
    <property type="protein sequence ID" value="AAR31568.1"/>
    <property type="molecule type" value="Genomic_DNA"/>
</dbReference>
<dbReference type="RefSeq" id="YP_081462.1">
    <property type="nucleotide sequence ID" value="NC_006273.2"/>
</dbReference>
<dbReference type="DNASU" id="3077477"/>
<dbReference type="GeneID" id="3077477"/>
<dbReference type="KEGG" id="vg:3077477"/>
<dbReference type="Proteomes" id="UP000000938">
    <property type="component" value="Segment"/>
</dbReference>
<dbReference type="GO" id="GO:0016020">
    <property type="term" value="C:membrane"/>
    <property type="evidence" value="ECO:0007669"/>
    <property type="project" value="UniProtKB-KW"/>
</dbReference>
<dbReference type="GO" id="GO:0019031">
    <property type="term" value="C:viral envelope"/>
    <property type="evidence" value="ECO:0007669"/>
    <property type="project" value="UniProtKB-KW"/>
</dbReference>
<dbReference type="GO" id="GO:0055036">
    <property type="term" value="C:virion membrane"/>
    <property type="evidence" value="ECO:0007669"/>
    <property type="project" value="UniProtKB-SubCell"/>
</dbReference>
<dbReference type="Gene3D" id="2.60.40.10">
    <property type="entry name" value="Immunoglobulins"/>
    <property type="match status" value="1"/>
</dbReference>
<dbReference type="InterPro" id="IPR036179">
    <property type="entry name" value="Ig-like_dom_sf"/>
</dbReference>
<dbReference type="InterPro" id="IPR013783">
    <property type="entry name" value="Ig-like_fold"/>
</dbReference>
<dbReference type="SUPFAM" id="SSF48726">
    <property type="entry name" value="Immunoglobulin"/>
    <property type="match status" value="1"/>
</dbReference>
<keyword id="KW-0426">Late protein</keyword>
<keyword id="KW-0472">Membrane</keyword>
<keyword id="KW-1185">Reference proteome</keyword>
<keyword id="KW-0732">Signal</keyword>
<keyword id="KW-0812">Transmembrane</keyword>
<keyword id="KW-1133">Transmembrane helix</keyword>
<keyword id="KW-0261">Viral envelope protein</keyword>
<keyword id="KW-0946">Virion</keyword>
<feature type="signal peptide" evidence="1">
    <location>
        <begin position="1"/>
        <end position="27"/>
    </location>
</feature>
<feature type="chain" id="PRO_0000417833" description="Glycoprotein UL1">
    <location>
        <begin position="28"/>
        <end position="218"/>
    </location>
</feature>
<feature type="transmembrane region" description="Helical" evidence="1">
    <location>
        <begin position="178"/>
        <end position="198"/>
    </location>
</feature>
<gene>
    <name type="primary">UL1</name>
</gene>
<name>UL01_HCMVM</name>
<organismHost>
    <name type="scientific">Homo sapiens</name>
    <name type="common">Human</name>
    <dbReference type="NCBI Taxonomy" id="9606"/>
</organismHost>
<sequence>MGVQCNSKLLLLAVLITIILSSILVQAIPHKQKTSYQQLLLQSEHVQIPITVAEGDTICFNVSDNPCNFSSYWNHNNCELCGWTPFYSEYAGYSENKSCHPRFTCLHDTKGLKLHNVTTNDSGIYTRNVYYCDIPCNISDDHKHNVEDFDNCNTTINRTHYIITVSSSRYSKRTNSHVATHVGWTATVVIIICVLTYVNVTTTLKHRLRTRNNVNHTM</sequence>
<comment type="subcellular location">
    <subcellularLocation>
        <location evidence="2">Virion membrane</location>
        <topology evidence="2">Single-pass membrane protein</topology>
    </subcellularLocation>
</comment>
<comment type="similarity">
    <text evidence="2">Belongs to the RL11 family.</text>
</comment>
<proteinExistence type="inferred from homology"/>
<protein>
    <recommendedName>
        <fullName>Glycoprotein UL1</fullName>
    </recommendedName>
</protein>
<organism>
    <name type="scientific">Human cytomegalovirus (strain Merlin)</name>
    <name type="common">HHV-5</name>
    <name type="synonym">Human herpesvirus 5</name>
    <dbReference type="NCBI Taxonomy" id="295027"/>
    <lineage>
        <taxon>Viruses</taxon>
        <taxon>Duplodnaviria</taxon>
        <taxon>Heunggongvirae</taxon>
        <taxon>Peploviricota</taxon>
        <taxon>Herviviricetes</taxon>
        <taxon>Herpesvirales</taxon>
        <taxon>Orthoherpesviridae</taxon>
        <taxon>Betaherpesvirinae</taxon>
        <taxon>Cytomegalovirus</taxon>
        <taxon>Cytomegalovirus humanbeta5</taxon>
        <taxon>Human cytomegalovirus</taxon>
    </lineage>
</organism>
<accession>Q6SWC8</accession>
<accession>D2K3H2</accession>